<keyword id="KW-0025">Alternative splicing</keyword>
<keyword id="KW-1184">Jasmonic acid signaling pathway</keyword>
<keyword id="KW-0539">Nucleus</keyword>
<keyword id="KW-0611">Plant defense</keyword>
<keyword id="KW-1185">Reference proteome</keyword>
<keyword id="KW-0804">Transcription</keyword>
<keyword id="KW-0805">Transcription regulation</keyword>
<keyword id="KW-0832">Ubl conjugation</keyword>
<accession>Q58G47</accession>
<accession>Q9LP75</accession>
<comment type="function">
    <text evidence="6 9">Repressor of jasmonate responses (PubMed:19151223). Interacts with and suppresses RHD6 and RSL1 transcription factor activities to negatively regulate jasmonate-stimulated root hair development (PubMed:31988260).</text>
</comment>
<comment type="subunit">
    <text evidence="6 7 8 9">Homo- and heterodimer. Interacts with MYC2, AFPH2/NINJA, TIFY10A/JAZ1, TIFY6B/JAZ3, TIFY5A/JAZ8, TIFY9/JAZ10 and TIFY3A/JAZ11 (PubMed:19151223, PubMed:19309455, PubMed:20360743). Interacts with RHD6 and RSL1 (PubMed:31988260).</text>
</comment>
<comment type="interaction">
    <interactant intactId="EBI-2312053">
        <id>Q58G47</id>
    </interactant>
    <interactant intactId="EBI-1787005">
        <id>Q9SV55</id>
        <label>AFPH2</label>
    </interactant>
    <organismsDiffer>false</organismsDiffer>
    <experiments>2</experiments>
</comment>
<comment type="interaction">
    <interactant intactId="EBI-2312053">
        <id>Q58G47</id>
    </interactant>
    <interactant intactId="EBI-4434261">
        <id>Q9LNJ5</id>
        <label>BHLH13</label>
    </interactant>
    <organismsDiffer>false</organismsDiffer>
    <experiments>4</experiments>
</comment>
<comment type="interaction">
    <interactant intactId="EBI-2312053">
        <id>Q58G47</id>
    </interactant>
    <interactant intactId="EBI-1792431">
        <id>Q9LVI4</id>
        <label>TIFY6B</label>
    </interactant>
    <organismsDiffer>false</organismsDiffer>
    <experiments>3</experiments>
</comment>
<comment type="subcellular location">
    <subcellularLocation>
        <location evidence="4">Nucleus</location>
    </subcellularLocation>
</comment>
<comment type="alternative products">
    <event type="alternative splicing"/>
    <isoform>
        <id>Q58G47-1</id>
        <name>1</name>
        <sequence type="displayed"/>
    </isoform>
    <text>A number of isoforms are produced. According to EST sequences.</text>
</comment>
<comment type="induction">
    <text evidence="5">Up-regulated by wounding and herbivory.</text>
</comment>
<comment type="domain">
    <text evidence="1">The jas domain (259-284) is required for interaction with COI1.</text>
</comment>
<comment type="PTM">
    <text evidence="1">Ubiquitinated. Targeted for degradation by the SCF(COI1) E3 ubiquitin ligase-proteasome pathway during jasmonate signaling.</text>
</comment>
<comment type="similarity">
    <text evidence="10">Belongs to the TIFY/JAZ family.</text>
</comment>
<comment type="sequence caution" evidence="10">
    <conflict type="erroneous gene model prediction">
        <sequence resource="EMBL-CDS" id="AAF79697"/>
    </conflict>
</comment>
<name>TIF6A_ARATH</name>
<feature type="chain" id="PRO_0000300647" description="Protein TIFY 6A">
    <location>
        <begin position="1"/>
        <end position="310"/>
    </location>
</feature>
<feature type="domain" description="Tify" evidence="3">
    <location>
        <begin position="141"/>
        <end position="176"/>
    </location>
</feature>
<feature type="short sequence motif" description="Jas" evidence="2">
    <location>
        <begin position="259"/>
        <end position="284"/>
    </location>
</feature>
<feature type="short sequence motif" description="Nuclear localization signal" evidence="4">
    <location>
        <begin position="261"/>
        <end position="268"/>
    </location>
</feature>
<reference key="1">
    <citation type="journal article" date="2000" name="Nature">
        <title>Sequence and analysis of chromosome 1 of the plant Arabidopsis thaliana.</title>
        <authorList>
            <person name="Theologis A."/>
            <person name="Ecker J.R."/>
            <person name="Palm C.J."/>
            <person name="Federspiel N.A."/>
            <person name="Kaul S."/>
            <person name="White O."/>
            <person name="Alonso J."/>
            <person name="Altafi H."/>
            <person name="Araujo R."/>
            <person name="Bowman C.L."/>
            <person name="Brooks S.Y."/>
            <person name="Buehler E."/>
            <person name="Chan A."/>
            <person name="Chao Q."/>
            <person name="Chen H."/>
            <person name="Cheuk R.F."/>
            <person name="Chin C.W."/>
            <person name="Chung M.K."/>
            <person name="Conn L."/>
            <person name="Conway A.B."/>
            <person name="Conway A.R."/>
            <person name="Creasy T.H."/>
            <person name="Dewar K."/>
            <person name="Dunn P."/>
            <person name="Etgu P."/>
            <person name="Feldblyum T.V."/>
            <person name="Feng J.-D."/>
            <person name="Fong B."/>
            <person name="Fujii C.Y."/>
            <person name="Gill J.E."/>
            <person name="Goldsmith A.D."/>
            <person name="Haas B."/>
            <person name="Hansen N.F."/>
            <person name="Hughes B."/>
            <person name="Huizar L."/>
            <person name="Hunter J.L."/>
            <person name="Jenkins J."/>
            <person name="Johnson-Hopson C."/>
            <person name="Khan S."/>
            <person name="Khaykin E."/>
            <person name="Kim C.J."/>
            <person name="Koo H.L."/>
            <person name="Kremenetskaia I."/>
            <person name="Kurtz D.B."/>
            <person name="Kwan A."/>
            <person name="Lam B."/>
            <person name="Langin-Hooper S."/>
            <person name="Lee A."/>
            <person name="Lee J.M."/>
            <person name="Lenz C.A."/>
            <person name="Li J.H."/>
            <person name="Li Y.-P."/>
            <person name="Lin X."/>
            <person name="Liu S.X."/>
            <person name="Liu Z.A."/>
            <person name="Luros J.S."/>
            <person name="Maiti R."/>
            <person name="Marziali A."/>
            <person name="Militscher J."/>
            <person name="Miranda M."/>
            <person name="Nguyen M."/>
            <person name="Nierman W.C."/>
            <person name="Osborne B.I."/>
            <person name="Pai G."/>
            <person name="Peterson J."/>
            <person name="Pham P.K."/>
            <person name="Rizzo M."/>
            <person name="Rooney T."/>
            <person name="Rowley D."/>
            <person name="Sakano H."/>
            <person name="Salzberg S.L."/>
            <person name="Schwartz J.R."/>
            <person name="Shinn P."/>
            <person name="Southwick A.M."/>
            <person name="Sun H."/>
            <person name="Tallon L.J."/>
            <person name="Tambunga G."/>
            <person name="Toriumi M.J."/>
            <person name="Town C.D."/>
            <person name="Utterback T."/>
            <person name="Van Aken S."/>
            <person name="Vaysberg M."/>
            <person name="Vysotskaia V.S."/>
            <person name="Walker M."/>
            <person name="Wu D."/>
            <person name="Yu G."/>
            <person name="Fraser C.M."/>
            <person name="Venter J.C."/>
            <person name="Davis R.W."/>
        </authorList>
    </citation>
    <scope>NUCLEOTIDE SEQUENCE [LARGE SCALE GENOMIC DNA]</scope>
    <source>
        <strain>cv. Columbia</strain>
    </source>
</reference>
<reference key="2">
    <citation type="journal article" date="2017" name="Plant J.">
        <title>Araport11: a complete reannotation of the Arabidopsis thaliana reference genome.</title>
        <authorList>
            <person name="Cheng C.Y."/>
            <person name="Krishnakumar V."/>
            <person name="Chan A.P."/>
            <person name="Thibaud-Nissen F."/>
            <person name="Schobel S."/>
            <person name="Town C.D."/>
        </authorList>
    </citation>
    <scope>GENOME REANNOTATION</scope>
    <source>
        <strain>cv. Columbia</strain>
    </source>
</reference>
<reference key="3">
    <citation type="submission" date="2005-03" db="EMBL/GenBank/DDBJ databases">
        <authorList>
            <person name="Underwood B.A."/>
            <person name="Xiao Y.-L."/>
            <person name="Moskal W.A. Jr."/>
            <person name="Monaghan E.L."/>
            <person name="Wang W."/>
            <person name="Redman J.C."/>
            <person name="Wu H.C."/>
            <person name="Utterback T."/>
            <person name="Town C.D."/>
        </authorList>
    </citation>
    <scope>NUCLEOTIDE SEQUENCE [LARGE SCALE MRNA]</scope>
    <source>
        <strain>cv. Columbia</strain>
    </source>
</reference>
<reference key="4">
    <citation type="submission" date="2005-07" db="EMBL/GenBank/DDBJ databases">
        <title>Reconstruction of cDNA sequences for hypothetical genes in Arabidopsis thaliana from 5' and 3' RACE products.</title>
        <authorList>
            <person name="Xiao Y.-L."/>
            <person name="Underwood B.A."/>
            <person name="Moskal W.A. Jr."/>
            <person name="Redman J.C."/>
            <person name="Wang W."/>
            <person name="Monaghan E.L."/>
            <person name="Wu H.C."/>
            <person name="Utterback T."/>
            <person name="Town C.D."/>
        </authorList>
    </citation>
    <scope>NUCLEOTIDE SEQUENCE [LARGE SCALE MRNA]</scope>
</reference>
<reference key="5">
    <citation type="journal article" date="2007" name="Nature">
        <title>The JAZ family of repressors is the missing link in jasmonate signalling.</title>
        <authorList>
            <person name="Chini A."/>
            <person name="Fonseca S."/>
            <person name="Fernandez G."/>
            <person name="Adie B."/>
            <person name="Chico J.M."/>
            <person name="Lorenzo O."/>
            <person name="Garcia-Casado G."/>
            <person name="Lopez-Vidriero I."/>
            <person name="Lozano F.M."/>
            <person name="Ponce M.R."/>
            <person name="Micol J.L."/>
            <person name="Solano R."/>
        </authorList>
    </citation>
    <scope>GENE FAMILY</scope>
    <scope>NOMENCLATURE</scope>
</reference>
<reference key="6">
    <citation type="journal article" date="2007" name="Plant Cell">
        <title>A downstream mediator in the growth repression limb of the jasmonate pathway.</title>
        <authorList>
            <person name="Yan Y."/>
            <person name="Stolz S."/>
            <person name="Chetelat A."/>
            <person name="Reymond P."/>
            <person name="Pagni M."/>
            <person name="Dubugnon L."/>
            <person name="Farmer E.E."/>
        </authorList>
    </citation>
    <scope>DOMAIN</scope>
</reference>
<reference key="7">
    <citation type="journal article" date="2007" name="Trends Plant Sci.">
        <title>The tify family previously known as ZIM.</title>
        <authorList>
            <person name="Vanholme B."/>
            <person name="Grunewald W."/>
            <person name="Bateman A."/>
            <person name="Kohchi T."/>
            <person name="Gheysen G."/>
        </authorList>
    </citation>
    <scope>GENE FAMILY</scope>
    <scope>NOMENCLATURE</scope>
</reference>
<reference key="8">
    <citation type="journal article" date="2008" name="Plant Physiol.">
        <title>Regulation and function of Arabidopsis JASMONATE ZIM-domain genes in response to wounding and herbivory.</title>
        <authorList>
            <person name="Chung H.S."/>
            <person name="Koo A.J."/>
            <person name="Gao X."/>
            <person name="Jayanty S."/>
            <person name="Thines B."/>
            <person name="Jones A.D."/>
            <person name="Howe G.A."/>
        </authorList>
    </citation>
    <scope>INDUCTION BY WOUNDING AND HERBIVORY</scope>
</reference>
<reference key="9">
    <citation type="journal article" date="2009" name="Plant Cell">
        <title>A critical role for the TIFY motif in repression of jasmonate signaling by a stabilized splice variant of the JASMONATE ZIM-domain protein JAZ10 in Arabidopsis.</title>
        <authorList>
            <person name="Chung H.S."/>
            <person name="Howe G.A."/>
        </authorList>
    </citation>
    <scope>FUNCTION</scope>
    <scope>INTERACTION WITH TIFY10A/JAZ1; TIFY6B/JAZ3; TIFY5A/JAZ8; TIFY9/JAZ10 AND TIFY3A/JAZ11</scope>
    <scope>SUBUNIT</scope>
</reference>
<reference key="10">
    <citation type="journal article" date="2009" name="Plant J.">
        <title>The ZIM domain mediates homo- and heteromeric interactions between Arabidopsis JAZ proteins.</title>
        <authorList>
            <person name="Chini A."/>
            <person name="Fonseca S."/>
            <person name="Chico J.M."/>
            <person name="Fernandez-Calvo P."/>
            <person name="Solano R."/>
        </authorList>
    </citation>
    <scope>INTERACTION WITH MYC2</scope>
    <scope>SUBUNIT</scope>
</reference>
<reference key="11">
    <citation type="journal article" date="2010" name="Nature">
        <title>NINJA connects the co-repressor TOPLESS to jasmonate signalling.</title>
        <authorList>
            <person name="Pauwels L."/>
            <person name="Barbero G.F."/>
            <person name="Geerinck J."/>
            <person name="Tilleman S."/>
            <person name="Grunewald W."/>
            <person name="Perez A.C."/>
            <person name="Chico J.M."/>
            <person name="Bossche R.V."/>
            <person name="Sewell J."/>
            <person name="Gil E."/>
            <person name="Garcia-Casado G."/>
            <person name="Witters E."/>
            <person name="Inze D."/>
            <person name="Long J.A."/>
            <person name="De Jaeger G."/>
            <person name="Solano R."/>
            <person name="Goossens A."/>
        </authorList>
    </citation>
    <scope>INTERACTION WITH AFPH2/NINJA</scope>
</reference>
<reference key="12">
    <citation type="journal article" date="2020" name="Plant Cell">
        <title>Arabidopsis JAZ proteins interact with and suppress RHD6 transcription factor to regulate jasmonate-stimulated root hair development.</title>
        <authorList>
            <person name="Han X."/>
            <person name="Zhang M."/>
            <person name="Yang M."/>
            <person name="Hu Y."/>
        </authorList>
    </citation>
    <scope>FUNCTION</scope>
    <scope>INTERACTION WITH RHD6 AND RSL1</scope>
</reference>
<protein>
    <recommendedName>
        <fullName>Protein TIFY 6A</fullName>
    </recommendedName>
    <alternativeName>
        <fullName>Jasmonate ZIM domain-containing protein 4</fullName>
    </alternativeName>
</protein>
<organism>
    <name type="scientific">Arabidopsis thaliana</name>
    <name type="common">Mouse-ear cress</name>
    <dbReference type="NCBI Taxonomy" id="3702"/>
    <lineage>
        <taxon>Eukaryota</taxon>
        <taxon>Viridiplantae</taxon>
        <taxon>Streptophyta</taxon>
        <taxon>Embryophyta</taxon>
        <taxon>Tracheophyta</taxon>
        <taxon>Spermatophyta</taxon>
        <taxon>Magnoliopsida</taxon>
        <taxon>eudicotyledons</taxon>
        <taxon>Gunneridae</taxon>
        <taxon>Pentapetalae</taxon>
        <taxon>rosids</taxon>
        <taxon>malvids</taxon>
        <taxon>Brassicales</taxon>
        <taxon>Brassicaceae</taxon>
        <taxon>Camelineae</taxon>
        <taxon>Arabidopsis</taxon>
    </lineage>
</organism>
<sequence length="310" mass="33632">MERDFLGLGSKLSPITVKEETNEDSAPSRGMMDWSFSSKVGSGPQFLSFGTSQQETRVNTVNDHLLSSAAMDQNQRTYFSSLQEDRVFPGSSQQDQTTITVSMSEPNYINSFINHQHLGGSPIMAPPVSVFPAPTTIRSSSKPLPPQLTIFYAGSVLVYQDIAPEKAQAIMLLAGNGPHAKPVSQPKPQKLVHHSLPTTDPPTMPPSFLPSISYIVSETRSSGSNGVTGLGPTKTKASLASTRNNQTAAFSMAPTVGLPQTRKASLARFLEKRKERVINVSPYYVDNKSSIDCRTLMSECVSCPPAHHLH</sequence>
<evidence type="ECO:0000250" key="1">
    <source>
        <dbReference type="UniProtKB" id="Q7XPM8"/>
    </source>
</evidence>
<evidence type="ECO:0000255" key="2"/>
<evidence type="ECO:0000255" key="3">
    <source>
        <dbReference type="PROSITE-ProRule" id="PRU00650"/>
    </source>
</evidence>
<evidence type="ECO:0000255" key="4">
    <source>
        <dbReference type="PROSITE-ProRule" id="PRU00768"/>
    </source>
</evidence>
<evidence type="ECO:0000269" key="5">
    <source>
    </source>
</evidence>
<evidence type="ECO:0000269" key="6">
    <source>
    </source>
</evidence>
<evidence type="ECO:0000269" key="7">
    <source>
    </source>
</evidence>
<evidence type="ECO:0000269" key="8">
    <source>
    </source>
</evidence>
<evidence type="ECO:0000269" key="9">
    <source>
    </source>
</evidence>
<evidence type="ECO:0000305" key="10"/>
<dbReference type="EMBL" id="AC020889">
    <property type="protein sequence ID" value="AAF79697.1"/>
    <property type="status" value="ALT_SEQ"/>
    <property type="molecule type" value="Genomic_DNA"/>
</dbReference>
<dbReference type="EMBL" id="CP002684">
    <property type="protein sequence ID" value="AEE32302.1"/>
    <property type="molecule type" value="Genomic_DNA"/>
</dbReference>
<dbReference type="EMBL" id="AY954762">
    <property type="protein sequence ID" value="AAX55088.1"/>
    <property type="molecule type" value="mRNA"/>
</dbReference>
<dbReference type="EMBL" id="DQ132675">
    <property type="protein sequence ID" value="AAZ52705.1"/>
    <property type="molecule type" value="mRNA"/>
</dbReference>
<dbReference type="PIR" id="H96524">
    <property type="entry name" value="H96524"/>
</dbReference>
<dbReference type="RefSeq" id="NP_175283.2">
    <molecule id="Q58G47-1"/>
    <property type="nucleotide sequence ID" value="NM_103746.3"/>
</dbReference>
<dbReference type="SMR" id="Q58G47"/>
<dbReference type="BioGRID" id="26496">
    <property type="interactions" value="21"/>
</dbReference>
<dbReference type="DIP" id="DIP-53273N"/>
<dbReference type="FunCoup" id="Q58G47">
    <property type="interactions" value="312"/>
</dbReference>
<dbReference type="IntAct" id="Q58G47">
    <property type="interactions" value="14"/>
</dbReference>
<dbReference type="STRING" id="3702.Q58G47"/>
<dbReference type="iPTMnet" id="Q58G47"/>
<dbReference type="PaxDb" id="3702-AT1G48500.1"/>
<dbReference type="EnsemblPlants" id="AT1G48500.1">
    <molecule id="Q58G47-1"/>
    <property type="protein sequence ID" value="AT1G48500.1"/>
    <property type="gene ID" value="AT1G48500"/>
</dbReference>
<dbReference type="GeneID" id="841271"/>
<dbReference type="Gramene" id="AT1G48500.1">
    <molecule id="Q58G47-1"/>
    <property type="protein sequence ID" value="AT1G48500.1"/>
    <property type="gene ID" value="AT1G48500"/>
</dbReference>
<dbReference type="KEGG" id="ath:AT1G48500"/>
<dbReference type="Araport" id="AT1G48500"/>
<dbReference type="TAIR" id="AT1G48500">
    <property type="gene designation" value="JAZ4"/>
</dbReference>
<dbReference type="eggNOG" id="ENOG502QWAG">
    <property type="taxonomic scope" value="Eukaryota"/>
</dbReference>
<dbReference type="InParanoid" id="Q58G47"/>
<dbReference type="PhylomeDB" id="Q58G47"/>
<dbReference type="PRO" id="PR:Q58G47"/>
<dbReference type="Proteomes" id="UP000006548">
    <property type="component" value="Chromosome 1"/>
</dbReference>
<dbReference type="ExpressionAtlas" id="Q58G47">
    <property type="expression patterns" value="baseline and differential"/>
</dbReference>
<dbReference type="GO" id="GO:0005634">
    <property type="term" value="C:nucleus"/>
    <property type="evidence" value="ECO:0007669"/>
    <property type="project" value="UniProtKB-SubCell"/>
</dbReference>
<dbReference type="GO" id="GO:0009861">
    <property type="term" value="P:jasmonic acid and ethylene-dependent systemic resistance"/>
    <property type="evidence" value="ECO:0000315"/>
    <property type="project" value="TAIR"/>
</dbReference>
<dbReference type="GO" id="GO:0009867">
    <property type="term" value="P:jasmonic acid mediated signaling pathway"/>
    <property type="evidence" value="ECO:0000315"/>
    <property type="project" value="TAIR"/>
</dbReference>
<dbReference type="GO" id="GO:0009409">
    <property type="term" value="P:response to cold"/>
    <property type="evidence" value="ECO:0000315"/>
    <property type="project" value="TAIR"/>
</dbReference>
<dbReference type="InterPro" id="IPR018467">
    <property type="entry name" value="CCT_CS"/>
</dbReference>
<dbReference type="InterPro" id="IPR040390">
    <property type="entry name" value="TIFY/JAZ"/>
</dbReference>
<dbReference type="InterPro" id="IPR010399">
    <property type="entry name" value="Tify_dom"/>
</dbReference>
<dbReference type="PANTHER" id="PTHR33077">
    <property type="entry name" value="PROTEIN TIFY 4A-RELATED-RELATED"/>
    <property type="match status" value="1"/>
</dbReference>
<dbReference type="PANTHER" id="PTHR33077:SF151">
    <property type="entry name" value="PROTEIN TIFY 6A-RELATED"/>
    <property type="match status" value="1"/>
</dbReference>
<dbReference type="Pfam" id="PF09425">
    <property type="entry name" value="Jas_motif"/>
    <property type="match status" value="1"/>
</dbReference>
<dbReference type="Pfam" id="PF06200">
    <property type="entry name" value="tify"/>
    <property type="match status" value="1"/>
</dbReference>
<dbReference type="SMART" id="SM00979">
    <property type="entry name" value="TIFY"/>
    <property type="match status" value="1"/>
</dbReference>
<dbReference type="PROSITE" id="PS51320">
    <property type="entry name" value="TIFY"/>
    <property type="match status" value="1"/>
</dbReference>
<gene>
    <name type="primary">TIFY6A</name>
    <name type="synonym">JAZ4</name>
    <name type="ordered locus">At1g48500</name>
    <name type="ORF">T1N15.11</name>
</gene>
<proteinExistence type="evidence at protein level"/>